<name>FBD35_ARATH</name>
<protein>
    <recommendedName>
        <fullName>Putative FBD-associated F-box protein At1g78730</fullName>
    </recommendedName>
</protein>
<keyword id="KW-0025">Alternative splicing</keyword>
<keyword id="KW-1185">Reference proteome</keyword>
<comment type="alternative products">
    <event type="alternative splicing"/>
    <isoform>
        <id>Q9ZV91-1</id>
        <name>1</name>
        <sequence type="displayed"/>
    </isoform>
    <isoform>
        <id>Q9ZV91-2</id>
        <name>2</name>
        <sequence type="described" ref="VSP_039567 VSP_039568 VSP_039569"/>
    </isoform>
</comment>
<comment type="sequence caution" evidence="2">
    <conflict type="erroneous gene model prediction">
        <sequence resource="EMBL-CDS" id="AAC83036"/>
    </conflict>
</comment>
<gene>
    <name type="ordered locus">At1g78730</name>
    <name type="ORF">F9K20.23</name>
</gene>
<feature type="chain" id="PRO_0000396022" description="Putative FBD-associated F-box protein At1g78730">
    <location>
        <begin position="1"/>
        <end position="420"/>
    </location>
</feature>
<feature type="domain" description="F-box">
    <location>
        <begin position="21"/>
        <end position="71"/>
    </location>
</feature>
<feature type="domain" description="FBD">
    <location>
        <begin position="341"/>
        <end position="390"/>
    </location>
</feature>
<feature type="splice variant" id="VSP_039567" description="In isoform 2." evidence="1">
    <location>
        <begin position="1"/>
        <end position="154"/>
    </location>
</feature>
<feature type="splice variant" id="VSP_039568" description="In isoform 2." evidence="1">
    <original>GFSKTPGE</original>
    <variation>VFLESGRN</variation>
    <location>
        <begin position="331"/>
        <end position="338"/>
    </location>
</feature>
<feature type="splice variant" id="VSP_039569" description="In isoform 2." evidence="1">
    <location>
        <begin position="339"/>
        <end position="420"/>
    </location>
</feature>
<proteinExistence type="evidence at transcript level"/>
<organism>
    <name type="scientific">Arabidopsis thaliana</name>
    <name type="common">Mouse-ear cress</name>
    <dbReference type="NCBI Taxonomy" id="3702"/>
    <lineage>
        <taxon>Eukaryota</taxon>
        <taxon>Viridiplantae</taxon>
        <taxon>Streptophyta</taxon>
        <taxon>Embryophyta</taxon>
        <taxon>Tracheophyta</taxon>
        <taxon>Spermatophyta</taxon>
        <taxon>Magnoliopsida</taxon>
        <taxon>eudicotyledons</taxon>
        <taxon>Gunneridae</taxon>
        <taxon>Pentapetalae</taxon>
        <taxon>rosids</taxon>
        <taxon>malvids</taxon>
        <taxon>Brassicales</taxon>
        <taxon>Brassicaceae</taxon>
        <taxon>Camelineae</taxon>
        <taxon>Arabidopsis</taxon>
    </lineage>
</organism>
<reference key="1">
    <citation type="journal article" date="2000" name="Nature">
        <title>Sequence and analysis of chromosome 1 of the plant Arabidopsis thaliana.</title>
        <authorList>
            <person name="Theologis A."/>
            <person name="Ecker J.R."/>
            <person name="Palm C.J."/>
            <person name="Federspiel N.A."/>
            <person name="Kaul S."/>
            <person name="White O."/>
            <person name="Alonso J."/>
            <person name="Altafi H."/>
            <person name="Araujo R."/>
            <person name="Bowman C.L."/>
            <person name="Brooks S.Y."/>
            <person name="Buehler E."/>
            <person name="Chan A."/>
            <person name="Chao Q."/>
            <person name="Chen H."/>
            <person name="Cheuk R.F."/>
            <person name="Chin C.W."/>
            <person name="Chung M.K."/>
            <person name="Conn L."/>
            <person name="Conway A.B."/>
            <person name="Conway A.R."/>
            <person name="Creasy T.H."/>
            <person name="Dewar K."/>
            <person name="Dunn P."/>
            <person name="Etgu P."/>
            <person name="Feldblyum T.V."/>
            <person name="Feng J.-D."/>
            <person name="Fong B."/>
            <person name="Fujii C.Y."/>
            <person name="Gill J.E."/>
            <person name="Goldsmith A.D."/>
            <person name="Haas B."/>
            <person name="Hansen N.F."/>
            <person name="Hughes B."/>
            <person name="Huizar L."/>
            <person name="Hunter J.L."/>
            <person name="Jenkins J."/>
            <person name="Johnson-Hopson C."/>
            <person name="Khan S."/>
            <person name="Khaykin E."/>
            <person name="Kim C.J."/>
            <person name="Koo H.L."/>
            <person name="Kremenetskaia I."/>
            <person name="Kurtz D.B."/>
            <person name="Kwan A."/>
            <person name="Lam B."/>
            <person name="Langin-Hooper S."/>
            <person name="Lee A."/>
            <person name="Lee J.M."/>
            <person name="Lenz C.A."/>
            <person name="Li J.H."/>
            <person name="Li Y.-P."/>
            <person name="Lin X."/>
            <person name="Liu S.X."/>
            <person name="Liu Z.A."/>
            <person name="Luros J.S."/>
            <person name="Maiti R."/>
            <person name="Marziali A."/>
            <person name="Militscher J."/>
            <person name="Miranda M."/>
            <person name="Nguyen M."/>
            <person name="Nierman W.C."/>
            <person name="Osborne B.I."/>
            <person name="Pai G."/>
            <person name="Peterson J."/>
            <person name="Pham P.K."/>
            <person name="Rizzo M."/>
            <person name="Rooney T."/>
            <person name="Rowley D."/>
            <person name="Sakano H."/>
            <person name="Salzberg S.L."/>
            <person name="Schwartz J.R."/>
            <person name="Shinn P."/>
            <person name="Southwick A.M."/>
            <person name="Sun H."/>
            <person name="Tallon L.J."/>
            <person name="Tambunga G."/>
            <person name="Toriumi M.J."/>
            <person name="Town C.D."/>
            <person name="Utterback T."/>
            <person name="Van Aken S."/>
            <person name="Vaysberg M."/>
            <person name="Vysotskaia V.S."/>
            <person name="Walker M."/>
            <person name="Wu D."/>
            <person name="Yu G."/>
            <person name="Fraser C.M."/>
            <person name="Venter J.C."/>
            <person name="Davis R.W."/>
        </authorList>
    </citation>
    <scope>NUCLEOTIDE SEQUENCE [LARGE SCALE GENOMIC DNA]</scope>
    <source>
        <strain>cv. Columbia</strain>
    </source>
</reference>
<reference key="2">
    <citation type="journal article" date="2017" name="Plant J.">
        <title>Araport11: a complete reannotation of the Arabidopsis thaliana reference genome.</title>
        <authorList>
            <person name="Cheng C.Y."/>
            <person name="Krishnakumar V."/>
            <person name="Chan A.P."/>
            <person name="Thibaud-Nissen F."/>
            <person name="Schobel S."/>
            <person name="Town C.D."/>
        </authorList>
    </citation>
    <scope>GENOME REANNOTATION</scope>
    <source>
        <strain>cv. Columbia</strain>
    </source>
</reference>
<reference key="3">
    <citation type="submission" date="2006-07" db="EMBL/GenBank/DDBJ databases">
        <title>Large-scale analysis of RIKEN Arabidopsis full-length (RAFL) cDNAs.</title>
        <authorList>
            <person name="Totoki Y."/>
            <person name="Seki M."/>
            <person name="Ishida J."/>
            <person name="Nakajima M."/>
            <person name="Enju A."/>
            <person name="Kamiya A."/>
            <person name="Narusaka M."/>
            <person name="Shin-i T."/>
            <person name="Nakagawa M."/>
            <person name="Sakamoto N."/>
            <person name="Oishi K."/>
            <person name="Kohara Y."/>
            <person name="Kobayashi M."/>
            <person name="Toyoda A."/>
            <person name="Sakaki Y."/>
            <person name="Sakurai T."/>
            <person name="Iida K."/>
            <person name="Akiyama K."/>
            <person name="Satou M."/>
            <person name="Toyoda T."/>
            <person name="Konagaya A."/>
            <person name="Carninci P."/>
            <person name="Kawai J."/>
            <person name="Hayashizaki Y."/>
            <person name="Shinozaki K."/>
        </authorList>
    </citation>
    <scope>NUCLEOTIDE SEQUENCE [LARGE SCALE MRNA] (ISOFORM 2)</scope>
    <source>
        <strain>cv. Columbia</strain>
    </source>
</reference>
<sequence>MDEDAESRVSSTRSYDRRGHLDWLRKLPDSLLCQVFLNLPTKDVVKTSVLSSTWGNIWRSVPGLDLGYGDFPEYNAFVSFVDSFLGFNSESRLQNFKLNYQYLRLKYEWKWTELDNANVTRWINTVIKRKVEHLHLSDVTFSNPESVSLPCVKVMYLDMVKFANDLAFEMLISGCPVLESLTIKRSACDNVDYLRVCSQSLLSFTLVGHCNEDMVKEQVVAIDAPRLEDLKLYCHETASFIIKNPASLVKMDIDIMFNLSSEQKFDPNDLPKRNMIRNFLLGISGVKEMEISSHTLEVIYNYSRCERLPVFRNLSSLHADFDDYRWEMLPGFSKTPGEEPISILPGPQCNLPALEFVDILKPMVEKETELKLMSYFLEKSTILKKLTLRLGDFRGNEESALLKKLLTIPRLSSSCQVVVL</sequence>
<accession>Q9ZV91</accession>
<accession>F4IBU3</accession>
<accession>Q0WU87</accession>
<dbReference type="EMBL" id="AC005679">
    <property type="protein sequence ID" value="AAC83036.1"/>
    <property type="status" value="ALT_SEQ"/>
    <property type="molecule type" value="Genomic_DNA"/>
</dbReference>
<dbReference type="EMBL" id="CP002684">
    <property type="protein sequence ID" value="AEE36144.1"/>
    <property type="molecule type" value="Genomic_DNA"/>
</dbReference>
<dbReference type="EMBL" id="AK227293">
    <property type="protein sequence ID" value="BAE99311.1"/>
    <property type="molecule type" value="mRNA"/>
</dbReference>
<dbReference type="PIR" id="C96816">
    <property type="entry name" value="C96816"/>
</dbReference>
<dbReference type="RefSeq" id="NP_177994.2">
    <molecule id="Q9ZV91-1"/>
    <property type="nucleotide sequence ID" value="NM_106520.3"/>
</dbReference>
<dbReference type="FunCoup" id="Q9ZV91">
    <property type="interactions" value="174"/>
</dbReference>
<dbReference type="STRING" id="3702.Q9ZV91"/>
<dbReference type="PaxDb" id="3702-AT1G78730.1"/>
<dbReference type="EnsemblPlants" id="AT1G78730.1">
    <molecule id="Q9ZV91-1"/>
    <property type="protein sequence ID" value="AT1G78730.1"/>
    <property type="gene ID" value="AT1G78730"/>
</dbReference>
<dbReference type="GeneID" id="844209"/>
<dbReference type="Gramene" id="AT1G78730.1">
    <molecule id="Q9ZV91-1"/>
    <property type="protein sequence ID" value="AT1G78730.1"/>
    <property type="gene ID" value="AT1G78730"/>
</dbReference>
<dbReference type="KEGG" id="ath:AT1G78730"/>
<dbReference type="Araport" id="AT1G78730"/>
<dbReference type="TAIR" id="AT1G78730"/>
<dbReference type="HOGENOM" id="CLU_010721_1_3_1"/>
<dbReference type="InParanoid" id="Q9ZV91"/>
<dbReference type="OMA" id="CHETASF"/>
<dbReference type="PRO" id="PR:Q9ZV91"/>
<dbReference type="Proteomes" id="UP000006548">
    <property type="component" value="Chromosome 1"/>
</dbReference>
<dbReference type="ExpressionAtlas" id="Q9ZV91">
    <property type="expression patterns" value="baseline and differential"/>
</dbReference>
<dbReference type="CDD" id="cd22160">
    <property type="entry name" value="F-box_AtFBL13-like"/>
    <property type="match status" value="1"/>
</dbReference>
<dbReference type="Gene3D" id="3.80.10.10">
    <property type="entry name" value="Ribonuclease Inhibitor"/>
    <property type="match status" value="1"/>
</dbReference>
<dbReference type="InterPro" id="IPR036047">
    <property type="entry name" value="F-box-like_dom_sf"/>
</dbReference>
<dbReference type="InterPro" id="IPR053781">
    <property type="entry name" value="F-box_AtFBL13-like"/>
</dbReference>
<dbReference type="InterPro" id="IPR001810">
    <property type="entry name" value="F-box_dom"/>
</dbReference>
<dbReference type="InterPro" id="IPR006566">
    <property type="entry name" value="FBD"/>
</dbReference>
<dbReference type="InterPro" id="IPR050232">
    <property type="entry name" value="FBL13/AtMIF1-like"/>
</dbReference>
<dbReference type="InterPro" id="IPR032675">
    <property type="entry name" value="LRR_dom_sf"/>
</dbReference>
<dbReference type="InterPro" id="IPR055411">
    <property type="entry name" value="LRR_FXL15/At3g58940/PEG3-like"/>
</dbReference>
<dbReference type="PANTHER" id="PTHR31900">
    <property type="entry name" value="F-BOX/RNI SUPERFAMILY PROTEIN-RELATED"/>
    <property type="match status" value="1"/>
</dbReference>
<dbReference type="PANTHER" id="PTHR31900:SF33">
    <property type="entry name" value="PROTEIN WITH RNI-LIKE_FBD-LIKE DOMAIN"/>
    <property type="match status" value="1"/>
</dbReference>
<dbReference type="Pfam" id="PF00646">
    <property type="entry name" value="F-box"/>
    <property type="match status" value="1"/>
</dbReference>
<dbReference type="Pfam" id="PF08387">
    <property type="entry name" value="FBD"/>
    <property type="match status" value="1"/>
</dbReference>
<dbReference type="Pfam" id="PF24758">
    <property type="entry name" value="LRR_At5g56370"/>
    <property type="match status" value="1"/>
</dbReference>
<dbReference type="SMART" id="SM00579">
    <property type="entry name" value="FBD"/>
    <property type="match status" value="1"/>
</dbReference>
<dbReference type="SMART" id="SM00256">
    <property type="entry name" value="FBOX"/>
    <property type="match status" value="1"/>
</dbReference>
<dbReference type="SUPFAM" id="SSF81383">
    <property type="entry name" value="F-box domain"/>
    <property type="match status" value="1"/>
</dbReference>
<dbReference type="SUPFAM" id="SSF52047">
    <property type="entry name" value="RNI-like"/>
    <property type="match status" value="1"/>
</dbReference>
<evidence type="ECO:0000303" key="1">
    <source ref="3"/>
</evidence>
<evidence type="ECO:0000305" key="2"/>